<feature type="chain" id="PRO_1000091166" description="D-alanine--D-alanine ligase">
    <location>
        <begin position="1"/>
        <end position="313"/>
    </location>
</feature>
<feature type="domain" description="ATP-grasp" evidence="2">
    <location>
        <begin position="108"/>
        <end position="308"/>
    </location>
</feature>
<feature type="binding site" evidence="2">
    <location>
        <begin position="138"/>
        <end position="193"/>
    </location>
    <ligand>
        <name>ATP</name>
        <dbReference type="ChEBI" id="CHEBI:30616"/>
    </ligand>
</feature>
<feature type="binding site" evidence="2">
    <location>
        <position position="262"/>
    </location>
    <ligand>
        <name>Mg(2+)</name>
        <dbReference type="ChEBI" id="CHEBI:18420"/>
        <label>1</label>
    </ligand>
</feature>
<feature type="binding site" evidence="2">
    <location>
        <position position="275"/>
    </location>
    <ligand>
        <name>Mg(2+)</name>
        <dbReference type="ChEBI" id="CHEBI:18420"/>
        <label>1</label>
    </ligand>
</feature>
<feature type="binding site" evidence="2">
    <location>
        <position position="275"/>
    </location>
    <ligand>
        <name>Mg(2+)</name>
        <dbReference type="ChEBI" id="CHEBI:18420"/>
        <label>2</label>
    </ligand>
</feature>
<feature type="binding site" evidence="2">
    <location>
        <position position="277"/>
    </location>
    <ligand>
        <name>Mg(2+)</name>
        <dbReference type="ChEBI" id="CHEBI:18420"/>
        <label>2</label>
    </ligand>
</feature>
<proteinExistence type="inferred from homology"/>
<accession>A9AI94</accession>
<name>DDL_BURM1</name>
<gene>
    <name evidence="2" type="primary">ddl</name>
    <name type="ordered locus">Bmul_2834</name>
    <name type="ordered locus">BMULJ_00404</name>
</gene>
<comment type="function">
    <text evidence="2">Cell wall formation.</text>
</comment>
<comment type="catalytic activity">
    <reaction evidence="2">
        <text>2 D-alanine + ATP = D-alanyl-D-alanine + ADP + phosphate + H(+)</text>
        <dbReference type="Rhea" id="RHEA:11224"/>
        <dbReference type="ChEBI" id="CHEBI:15378"/>
        <dbReference type="ChEBI" id="CHEBI:30616"/>
        <dbReference type="ChEBI" id="CHEBI:43474"/>
        <dbReference type="ChEBI" id="CHEBI:57416"/>
        <dbReference type="ChEBI" id="CHEBI:57822"/>
        <dbReference type="ChEBI" id="CHEBI:456216"/>
        <dbReference type="EC" id="6.3.2.4"/>
    </reaction>
</comment>
<comment type="cofactor">
    <cofactor evidence="1">
        <name>Mg(2+)</name>
        <dbReference type="ChEBI" id="CHEBI:18420"/>
    </cofactor>
    <cofactor evidence="1">
        <name>Mn(2+)</name>
        <dbReference type="ChEBI" id="CHEBI:29035"/>
    </cofactor>
    <text evidence="1">Binds 2 magnesium or manganese ions per subunit.</text>
</comment>
<comment type="pathway">
    <text evidence="2">Cell wall biogenesis; peptidoglycan biosynthesis.</text>
</comment>
<comment type="subcellular location">
    <subcellularLocation>
        <location evidence="2">Cytoplasm</location>
    </subcellularLocation>
</comment>
<comment type="similarity">
    <text evidence="2">Belongs to the D-alanine--D-alanine ligase family.</text>
</comment>
<protein>
    <recommendedName>
        <fullName evidence="2">D-alanine--D-alanine ligase</fullName>
        <ecNumber evidence="2">6.3.2.4</ecNumber>
    </recommendedName>
    <alternativeName>
        <fullName evidence="2">D-Ala-D-Ala ligase</fullName>
    </alternativeName>
    <alternativeName>
        <fullName evidence="2">D-alanylalanine synthetase</fullName>
    </alternativeName>
</protein>
<dbReference type="EC" id="6.3.2.4" evidence="2"/>
<dbReference type="EMBL" id="CP000868">
    <property type="protein sequence ID" value="ABX16518.1"/>
    <property type="molecule type" value="Genomic_DNA"/>
</dbReference>
<dbReference type="EMBL" id="AP009385">
    <property type="protein sequence ID" value="BAG42372.1"/>
    <property type="molecule type" value="Genomic_DNA"/>
</dbReference>
<dbReference type="RefSeq" id="WP_006400439.1">
    <property type="nucleotide sequence ID" value="NC_010804.1"/>
</dbReference>
<dbReference type="SMR" id="A9AI94"/>
<dbReference type="STRING" id="395019.BMULJ_00404"/>
<dbReference type="KEGG" id="bmj:BMULJ_00404"/>
<dbReference type="KEGG" id="bmu:Bmul_2834"/>
<dbReference type="eggNOG" id="COG1181">
    <property type="taxonomic scope" value="Bacteria"/>
</dbReference>
<dbReference type="HOGENOM" id="CLU_039268_1_2_4"/>
<dbReference type="UniPathway" id="UPA00219"/>
<dbReference type="Proteomes" id="UP000008815">
    <property type="component" value="Chromosome 1"/>
</dbReference>
<dbReference type="GO" id="GO:0005829">
    <property type="term" value="C:cytosol"/>
    <property type="evidence" value="ECO:0007669"/>
    <property type="project" value="TreeGrafter"/>
</dbReference>
<dbReference type="GO" id="GO:0005524">
    <property type="term" value="F:ATP binding"/>
    <property type="evidence" value="ECO:0007669"/>
    <property type="project" value="UniProtKB-KW"/>
</dbReference>
<dbReference type="GO" id="GO:0008716">
    <property type="term" value="F:D-alanine-D-alanine ligase activity"/>
    <property type="evidence" value="ECO:0007669"/>
    <property type="project" value="UniProtKB-UniRule"/>
</dbReference>
<dbReference type="GO" id="GO:0046872">
    <property type="term" value="F:metal ion binding"/>
    <property type="evidence" value="ECO:0007669"/>
    <property type="project" value="UniProtKB-KW"/>
</dbReference>
<dbReference type="GO" id="GO:0071555">
    <property type="term" value="P:cell wall organization"/>
    <property type="evidence" value="ECO:0007669"/>
    <property type="project" value="UniProtKB-KW"/>
</dbReference>
<dbReference type="GO" id="GO:0009252">
    <property type="term" value="P:peptidoglycan biosynthetic process"/>
    <property type="evidence" value="ECO:0007669"/>
    <property type="project" value="UniProtKB-UniRule"/>
</dbReference>
<dbReference type="GO" id="GO:0008360">
    <property type="term" value="P:regulation of cell shape"/>
    <property type="evidence" value="ECO:0007669"/>
    <property type="project" value="UniProtKB-KW"/>
</dbReference>
<dbReference type="FunFam" id="3.30.1490.20:FF:000007">
    <property type="entry name" value="D-alanine--D-alanine ligase"/>
    <property type="match status" value="1"/>
</dbReference>
<dbReference type="FunFam" id="3.30.470.20:FF:000008">
    <property type="entry name" value="D-alanine--D-alanine ligase"/>
    <property type="match status" value="1"/>
</dbReference>
<dbReference type="FunFam" id="3.40.50.20:FF:000013">
    <property type="entry name" value="D-alanine--D-alanine ligase"/>
    <property type="match status" value="1"/>
</dbReference>
<dbReference type="Gene3D" id="3.40.50.20">
    <property type="match status" value="1"/>
</dbReference>
<dbReference type="Gene3D" id="3.30.1490.20">
    <property type="entry name" value="ATP-grasp fold, A domain"/>
    <property type="match status" value="1"/>
</dbReference>
<dbReference type="Gene3D" id="3.30.470.20">
    <property type="entry name" value="ATP-grasp fold, B domain"/>
    <property type="match status" value="1"/>
</dbReference>
<dbReference type="HAMAP" id="MF_00047">
    <property type="entry name" value="Dala_Dala_lig"/>
    <property type="match status" value="1"/>
</dbReference>
<dbReference type="InterPro" id="IPR011761">
    <property type="entry name" value="ATP-grasp"/>
</dbReference>
<dbReference type="InterPro" id="IPR013815">
    <property type="entry name" value="ATP_grasp_subdomain_1"/>
</dbReference>
<dbReference type="InterPro" id="IPR000291">
    <property type="entry name" value="D-Ala_lig_Van_CS"/>
</dbReference>
<dbReference type="InterPro" id="IPR005905">
    <property type="entry name" value="D_ala_D_ala"/>
</dbReference>
<dbReference type="InterPro" id="IPR011095">
    <property type="entry name" value="Dala_Dala_lig_C"/>
</dbReference>
<dbReference type="InterPro" id="IPR011127">
    <property type="entry name" value="Dala_Dala_lig_N"/>
</dbReference>
<dbReference type="InterPro" id="IPR016185">
    <property type="entry name" value="PreATP-grasp_dom_sf"/>
</dbReference>
<dbReference type="NCBIfam" id="TIGR01205">
    <property type="entry name" value="D_ala_D_alaTIGR"/>
    <property type="match status" value="1"/>
</dbReference>
<dbReference type="NCBIfam" id="NF002378">
    <property type="entry name" value="PRK01372.1"/>
    <property type="match status" value="1"/>
</dbReference>
<dbReference type="PANTHER" id="PTHR23132">
    <property type="entry name" value="D-ALANINE--D-ALANINE LIGASE"/>
    <property type="match status" value="1"/>
</dbReference>
<dbReference type="PANTHER" id="PTHR23132:SF23">
    <property type="entry name" value="D-ALANINE--D-ALANINE LIGASE B"/>
    <property type="match status" value="1"/>
</dbReference>
<dbReference type="Pfam" id="PF07478">
    <property type="entry name" value="Dala_Dala_lig_C"/>
    <property type="match status" value="1"/>
</dbReference>
<dbReference type="Pfam" id="PF01820">
    <property type="entry name" value="Dala_Dala_lig_N"/>
    <property type="match status" value="1"/>
</dbReference>
<dbReference type="PIRSF" id="PIRSF039102">
    <property type="entry name" value="Ddl/VanB"/>
    <property type="match status" value="1"/>
</dbReference>
<dbReference type="SUPFAM" id="SSF56059">
    <property type="entry name" value="Glutathione synthetase ATP-binding domain-like"/>
    <property type="match status" value="1"/>
</dbReference>
<dbReference type="SUPFAM" id="SSF52440">
    <property type="entry name" value="PreATP-grasp domain"/>
    <property type="match status" value="1"/>
</dbReference>
<dbReference type="PROSITE" id="PS50975">
    <property type="entry name" value="ATP_GRASP"/>
    <property type="match status" value="1"/>
</dbReference>
<dbReference type="PROSITE" id="PS00843">
    <property type="entry name" value="DALA_DALA_LIGASE_1"/>
    <property type="match status" value="1"/>
</dbReference>
<dbReference type="PROSITE" id="PS00844">
    <property type="entry name" value="DALA_DALA_LIGASE_2"/>
    <property type="match status" value="1"/>
</dbReference>
<reference key="1">
    <citation type="submission" date="2007-10" db="EMBL/GenBank/DDBJ databases">
        <title>Complete sequence of chromosome 1 of Burkholderia multivorans ATCC 17616.</title>
        <authorList>
            <person name="Copeland A."/>
            <person name="Lucas S."/>
            <person name="Lapidus A."/>
            <person name="Barry K."/>
            <person name="Glavina del Rio T."/>
            <person name="Dalin E."/>
            <person name="Tice H."/>
            <person name="Pitluck S."/>
            <person name="Chain P."/>
            <person name="Malfatti S."/>
            <person name="Shin M."/>
            <person name="Vergez L."/>
            <person name="Schmutz J."/>
            <person name="Larimer F."/>
            <person name="Land M."/>
            <person name="Hauser L."/>
            <person name="Kyrpides N."/>
            <person name="Kim E."/>
            <person name="Tiedje J."/>
            <person name="Richardson P."/>
        </authorList>
    </citation>
    <scope>NUCLEOTIDE SEQUENCE [LARGE SCALE GENOMIC DNA]</scope>
    <source>
        <strain>ATCC 17616 / 249</strain>
    </source>
</reference>
<reference key="2">
    <citation type="submission" date="2007-04" db="EMBL/GenBank/DDBJ databases">
        <title>Complete genome sequence of Burkholderia multivorans ATCC 17616.</title>
        <authorList>
            <person name="Ohtsubo Y."/>
            <person name="Yamashita A."/>
            <person name="Kurokawa K."/>
            <person name="Takami H."/>
            <person name="Yuhara S."/>
            <person name="Nishiyama E."/>
            <person name="Endo R."/>
            <person name="Miyazaki R."/>
            <person name="Ono A."/>
            <person name="Yano K."/>
            <person name="Ito M."/>
            <person name="Sota M."/>
            <person name="Yuji N."/>
            <person name="Hattori M."/>
            <person name="Tsuda M."/>
        </authorList>
    </citation>
    <scope>NUCLEOTIDE SEQUENCE [LARGE SCALE GENOMIC DNA]</scope>
    <source>
        <strain>ATCC 17616 / 249</strain>
    </source>
</reference>
<sequence length="313" mass="33405">MSGIDPKRFGKVAVLFGGESAEREVSLTSGRLVLQGLRDAGVDAHPFDPAERPLSALKDEGFVRAFNALHGGYGENGQIQGALDFYGIRYTGSGVLGSALGLDKFRTKLVWQQTGVPTPPFETVMRDDDYAARATEIVAKLGLPLFVKPASEGSSVAVLKVKTADALPAALAEAATHDKIVIVEKSIEGGGEYTACIAGDLDLPLIKIVPAGEFYDYHAKYVADDTQYLIPCGLPADQEAQLKRLARRAFDVLGCTDWGRADFMLDAAGNAYFLEVNTAPGMTDHSLPPKAARAIGISYSELVVKVLSLTLND</sequence>
<keyword id="KW-0067">ATP-binding</keyword>
<keyword id="KW-0133">Cell shape</keyword>
<keyword id="KW-0961">Cell wall biogenesis/degradation</keyword>
<keyword id="KW-0963">Cytoplasm</keyword>
<keyword id="KW-0436">Ligase</keyword>
<keyword id="KW-0460">Magnesium</keyword>
<keyword id="KW-0464">Manganese</keyword>
<keyword id="KW-0479">Metal-binding</keyword>
<keyword id="KW-0547">Nucleotide-binding</keyword>
<keyword id="KW-0573">Peptidoglycan synthesis</keyword>
<keyword id="KW-1185">Reference proteome</keyword>
<evidence type="ECO:0000250" key="1"/>
<evidence type="ECO:0000255" key="2">
    <source>
        <dbReference type="HAMAP-Rule" id="MF_00047"/>
    </source>
</evidence>
<organism>
    <name type="scientific">Burkholderia multivorans (strain ATCC 17616 / 249)</name>
    <dbReference type="NCBI Taxonomy" id="395019"/>
    <lineage>
        <taxon>Bacteria</taxon>
        <taxon>Pseudomonadati</taxon>
        <taxon>Pseudomonadota</taxon>
        <taxon>Betaproteobacteria</taxon>
        <taxon>Burkholderiales</taxon>
        <taxon>Burkholderiaceae</taxon>
        <taxon>Burkholderia</taxon>
        <taxon>Burkholderia cepacia complex</taxon>
    </lineage>
</organism>